<evidence type="ECO:0000255" key="1">
    <source>
        <dbReference type="HAMAP-Rule" id="MF_00639"/>
    </source>
</evidence>
<accession>Q1IKG8</accession>
<gene>
    <name evidence="1" type="primary">murD</name>
    <name type="ordered locus">Acid345_3631</name>
</gene>
<feature type="chain" id="PRO_0000257162" description="UDP-N-acetylmuramoylalanine--D-glutamate ligase">
    <location>
        <begin position="1"/>
        <end position="453"/>
    </location>
</feature>
<feature type="binding site" evidence="1">
    <location>
        <begin position="115"/>
        <end position="121"/>
    </location>
    <ligand>
        <name>ATP</name>
        <dbReference type="ChEBI" id="CHEBI:30616"/>
    </ligand>
</feature>
<protein>
    <recommendedName>
        <fullName evidence="1">UDP-N-acetylmuramoylalanine--D-glutamate ligase</fullName>
        <ecNumber evidence="1">6.3.2.9</ecNumber>
    </recommendedName>
    <alternativeName>
        <fullName evidence="1">D-glutamic acid-adding enzyme</fullName>
    </alternativeName>
    <alternativeName>
        <fullName evidence="1">UDP-N-acetylmuramoyl-L-alanyl-D-glutamate synthetase</fullName>
    </alternativeName>
</protein>
<organism>
    <name type="scientific">Koribacter versatilis (strain Ellin345)</name>
    <dbReference type="NCBI Taxonomy" id="204669"/>
    <lineage>
        <taxon>Bacteria</taxon>
        <taxon>Pseudomonadati</taxon>
        <taxon>Acidobacteriota</taxon>
        <taxon>Terriglobia</taxon>
        <taxon>Terriglobales</taxon>
        <taxon>Candidatus Korobacteraceae</taxon>
        <taxon>Candidatus Korobacter</taxon>
    </lineage>
</organism>
<reference key="1">
    <citation type="journal article" date="2009" name="Appl. Environ. Microbiol.">
        <title>Three genomes from the phylum Acidobacteria provide insight into the lifestyles of these microorganisms in soils.</title>
        <authorList>
            <person name="Ward N.L."/>
            <person name="Challacombe J.F."/>
            <person name="Janssen P.H."/>
            <person name="Henrissat B."/>
            <person name="Coutinho P.M."/>
            <person name="Wu M."/>
            <person name="Xie G."/>
            <person name="Haft D.H."/>
            <person name="Sait M."/>
            <person name="Badger J."/>
            <person name="Barabote R.D."/>
            <person name="Bradley B."/>
            <person name="Brettin T.S."/>
            <person name="Brinkac L.M."/>
            <person name="Bruce D."/>
            <person name="Creasy T."/>
            <person name="Daugherty S.C."/>
            <person name="Davidsen T.M."/>
            <person name="DeBoy R.T."/>
            <person name="Detter J.C."/>
            <person name="Dodson R.J."/>
            <person name="Durkin A.S."/>
            <person name="Ganapathy A."/>
            <person name="Gwinn-Giglio M."/>
            <person name="Han C.S."/>
            <person name="Khouri H."/>
            <person name="Kiss H."/>
            <person name="Kothari S.P."/>
            <person name="Madupu R."/>
            <person name="Nelson K.E."/>
            <person name="Nelson W.C."/>
            <person name="Paulsen I."/>
            <person name="Penn K."/>
            <person name="Ren Q."/>
            <person name="Rosovitz M.J."/>
            <person name="Selengut J.D."/>
            <person name="Shrivastava S."/>
            <person name="Sullivan S.A."/>
            <person name="Tapia R."/>
            <person name="Thompson L.S."/>
            <person name="Watkins K.L."/>
            <person name="Yang Q."/>
            <person name="Yu C."/>
            <person name="Zafar N."/>
            <person name="Zhou L."/>
            <person name="Kuske C.R."/>
        </authorList>
    </citation>
    <scope>NUCLEOTIDE SEQUENCE [LARGE SCALE GENOMIC DNA]</scope>
    <source>
        <strain>Ellin345</strain>
    </source>
</reference>
<dbReference type="EC" id="6.3.2.9" evidence="1"/>
<dbReference type="EMBL" id="CP000360">
    <property type="protein sequence ID" value="ABF42632.1"/>
    <property type="molecule type" value="Genomic_DNA"/>
</dbReference>
<dbReference type="RefSeq" id="WP_011524431.1">
    <property type="nucleotide sequence ID" value="NC_008009.1"/>
</dbReference>
<dbReference type="SMR" id="Q1IKG8"/>
<dbReference type="STRING" id="204669.Acid345_3631"/>
<dbReference type="EnsemblBacteria" id="ABF42632">
    <property type="protein sequence ID" value="ABF42632"/>
    <property type="gene ID" value="Acid345_3631"/>
</dbReference>
<dbReference type="KEGG" id="aba:Acid345_3631"/>
<dbReference type="eggNOG" id="COG0771">
    <property type="taxonomic scope" value="Bacteria"/>
</dbReference>
<dbReference type="HOGENOM" id="CLU_032540_0_0_0"/>
<dbReference type="OrthoDB" id="9809796at2"/>
<dbReference type="UniPathway" id="UPA00219"/>
<dbReference type="Proteomes" id="UP000002432">
    <property type="component" value="Chromosome"/>
</dbReference>
<dbReference type="GO" id="GO:0005737">
    <property type="term" value="C:cytoplasm"/>
    <property type="evidence" value="ECO:0007669"/>
    <property type="project" value="UniProtKB-SubCell"/>
</dbReference>
<dbReference type="GO" id="GO:0005524">
    <property type="term" value="F:ATP binding"/>
    <property type="evidence" value="ECO:0007669"/>
    <property type="project" value="UniProtKB-UniRule"/>
</dbReference>
<dbReference type="GO" id="GO:0008764">
    <property type="term" value="F:UDP-N-acetylmuramoylalanine-D-glutamate ligase activity"/>
    <property type="evidence" value="ECO:0007669"/>
    <property type="project" value="UniProtKB-UniRule"/>
</dbReference>
<dbReference type="GO" id="GO:0051301">
    <property type="term" value="P:cell division"/>
    <property type="evidence" value="ECO:0007669"/>
    <property type="project" value="UniProtKB-KW"/>
</dbReference>
<dbReference type="GO" id="GO:0071555">
    <property type="term" value="P:cell wall organization"/>
    <property type="evidence" value="ECO:0007669"/>
    <property type="project" value="UniProtKB-KW"/>
</dbReference>
<dbReference type="GO" id="GO:0009252">
    <property type="term" value="P:peptidoglycan biosynthetic process"/>
    <property type="evidence" value="ECO:0007669"/>
    <property type="project" value="UniProtKB-UniRule"/>
</dbReference>
<dbReference type="GO" id="GO:0008360">
    <property type="term" value="P:regulation of cell shape"/>
    <property type="evidence" value="ECO:0007669"/>
    <property type="project" value="UniProtKB-KW"/>
</dbReference>
<dbReference type="Gene3D" id="3.90.190.20">
    <property type="entry name" value="Mur ligase, C-terminal domain"/>
    <property type="match status" value="1"/>
</dbReference>
<dbReference type="Gene3D" id="3.40.1190.10">
    <property type="entry name" value="Mur-like, catalytic domain"/>
    <property type="match status" value="1"/>
</dbReference>
<dbReference type="Gene3D" id="3.40.50.720">
    <property type="entry name" value="NAD(P)-binding Rossmann-like Domain"/>
    <property type="match status" value="1"/>
</dbReference>
<dbReference type="HAMAP" id="MF_00639">
    <property type="entry name" value="MurD"/>
    <property type="match status" value="1"/>
</dbReference>
<dbReference type="InterPro" id="IPR036565">
    <property type="entry name" value="Mur-like_cat_sf"/>
</dbReference>
<dbReference type="InterPro" id="IPR004101">
    <property type="entry name" value="Mur_ligase_C"/>
</dbReference>
<dbReference type="InterPro" id="IPR036615">
    <property type="entry name" value="Mur_ligase_C_dom_sf"/>
</dbReference>
<dbReference type="InterPro" id="IPR013221">
    <property type="entry name" value="Mur_ligase_cen"/>
</dbReference>
<dbReference type="InterPro" id="IPR005762">
    <property type="entry name" value="MurD"/>
</dbReference>
<dbReference type="NCBIfam" id="TIGR01087">
    <property type="entry name" value="murD"/>
    <property type="match status" value="1"/>
</dbReference>
<dbReference type="PANTHER" id="PTHR43692">
    <property type="entry name" value="UDP-N-ACETYLMURAMOYLALANINE--D-GLUTAMATE LIGASE"/>
    <property type="match status" value="1"/>
</dbReference>
<dbReference type="PANTHER" id="PTHR43692:SF1">
    <property type="entry name" value="UDP-N-ACETYLMURAMOYLALANINE--D-GLUTAMATE LIGASE"/>
    <property type="match status" value="1"/>
</dbReference>
<dbReference type="Pfam" id="PF02875">
    <property type="entry name" value="Mur_ligase_C"/>
    <property type="match status" value="1"/>
</dbReference>
<dbReference type="Pfam" id="PF08245">
    <property type="entry name" value="Mur_ligase_M"/>
    <property type="match status" value="1"/>
</dbReference>
<dbReference type="Pfam" id="PF21799">
    <property type="entry name" value="MurD-like_N"/>
    <property type="match status" value="1"/>
</dbReference>
<dbReference type="Pfam" id="PF13241">
    <property type="entry name" value="NAD_binding_7"/>
    <property type="match status" value="1"/>
</dbReference>
<dbReference type="SUPFAM" id="SSF51984">
    <property type="entry name" value="MurCD N-terminal domain"/>
    <property type="match status" value="1"/>
</dbReference>
<dbReference type="SUPFAM" id="SSF53623">
    <property type="entry name" value="MurD-like peptide ligases, catalytic domain"/>
    <property type="match status" value="1"/>
</dbReference>
<dbReference type="SUPFAM" id="SSF53244">
    <property type="entry name" value="MurD-like peptide ligases, peptide-binding domain"/>
    <property type="match status" value="1"/>
</dbReference>
<proteinExistence type="inferred from homology"/>
<keyword id="KW-0067">ATP-binding</keyword>
<keyword id="KW-0131">Cell cycle</keyword>
<keyword id="KW-0132">Cell division</keyword>
<keyword id="KW-0133">Cell shape</keyword>
<keyword id="KW-0961">Cell wall biogenesis/degradation</keyword>
<keyword id="KW-0963">Cytoplasm</keyword>
<keyword id="KW-0436">Ligase</keyword>
<keyword id="KW-0547">Nucleotide-binding</keyword>
<keyword id="KW-0573">Peptidoglycan synthesis</keyword>
<keyword id="KW-1185">Reference proteome</keyword>
<comment type="function">
    <text evidence="1">Cell wall formation. Catalyzes the addition of glutamate to the nucleotide precursor UDP-N-acetylmuramoyl-L-alanine (UMA).</text>
</comment>
<comment type="catalytic activity">
    <reaction evidence="1">
        <text>UDP-N-acetyl-alpha-D-muramoyl-L-alanine + D-glutamate + ATP = UDP-N-acetyl-alpha-D-muramoyl-L-alanyl-D-glutamate + ADP + phosphate + H(+)</text>
        <dbReference type="Rhea" id="RHEA:16429"/>
        <dbReference type="ChEBI" id="CHEBI:15378"/>
        <dbReference type="ChEBI" id="CHEBI:29986"/>
        <dbReference type="ChEBI" id="CHEBI:30616"/>
        <dbReference type="ChEBI" id="CHEBI:43474"/>
        <dbReference type="ChEBI" id="CHEBI:83898"/>
        <dbReference type="ChEBI" id="CHEBI:83900"/>
        <dbReference type="ChEBI" id="CHEBI:456216"/>
        <dbReference type="EC" id="6.3.2.9"/>
    </reaction>
</comment>
<comment type="pathway">
    <text evidence="1">Cell wall biogenesis; peptidoglycan biosynthesis.</text>
</comment>
<comment type="subcellular location">
    <subcellularLocation>
        <location evidence="1">Cytoplasm</location>
    </subcellularLocation>
</comment>
<comment type="similarity">
    <text evidence="1">Belongs to the MurCDEF family.</text>
</comment>
<name>MURD_KORVE</name>
<sequence length="453" mass="49582">MDVRGKRVLVVGLGKSGIASATFLQAQGAKVTVSDSKSEAQLRQEIPLLLDKGITVETGHHGERTFRDQDLIVISPGVPFDQPQLEQARKQGIPVIGEIELAAQFVPGHVIAITGSNGKTTTTSLCGDILQSGGKKTLVGGNIGTPAISFAQLANDDTWSVLEISSFQLETIERFRPEIAAILNITPDHLDRHGTFEKYAAAKERIFENQREHDFAILNADNEPCVEIAKRVKSQVLWFSRQHEVKHGTFVREDKIYFRDPKGEREIMPVADMLLKGAHNVENVLAAVCVGVAASVAPEQIRKAVSQFKAVEHRLEYTATVKGVDYYNDSKATNVDATIKALESFSKGVHLILGGKDKGSPYTVLNDLLHERAKTVYTIGAAAAKIEAEVKGVEVVHAETLENAVKLASQKAVKGDVVLLAPACASFDQFQSYEHRGRIFKELVRKMAEQEKK</sequence>